<reference key="1">
    <citation type="journal article" date="1999" name="Biochem. J.">
        <title>An extremely thermostable aldolase from Sulfolobus solfataricus with specificity for non-phosphorylated substrates.</title>
        <authorList>
            <person name="Buchanan C.L."/>
            <person name="Connaris H."/>
            <person name="Danson M.J."/>
            <person name="Reeve C.D."/>
            <person name="Hough D.W."/>
        </authorList>
    </citation>
    <scope>NUCLEOTIDE SEQUENCE [GENOMIC DNA]</scope>
    <scope>PROTEIN SEQUENCE OF 2-39</scope>
    <scope>FUNCTION</scope>
    <scope>CATALYTIC ACTIVITY</scope>
    <scope>BIOPHYSICOCHEMICAL PROPERTIES</scope>
    <scope>SUBSTRATE SPECIFICITY</scope>
    <scope>SUBUNIT</scope>
    <source>
        <strain>ATCC 35091 / DSM 1616 / JCM 8930 / NBRC 15331 / P1</strain>
    </source>
</reference>
<reference key="2">
    <citation type="journal article" date="2003" name="J. Biol. Chem.">
        <title>Metabolic pathway promiscuity in the archaeon Sulfolobus solfataricus revealed by studies on glucose dehydrogenase and 2-keto-3-deoxygluconate aldolase.</title>
        <authorList>
            <person name="Lamble H.J."/>
            <person name="Heyer N.I."/>
            <person name="Bull S.D."/>
            <person name="Hough D.W."/>
            <person name="Danson M.J."/>
        </authorList>
    </citation>
    <scope>FUNCTION</scope>
    <scope>CATALYTIC ACTIVITY</scope>
    <scope>SUBSTRATE STEREOSELECTIVITY</scope>
    <scope>BIOPHYSICOCHEMICAL PROPERTIES</scope>
    <source>
        <strain>ATCC 35091 / DSM 1616 / JCM 8930 / NBRC 15331 / P1</strain>
    </source>
</reference>
<reference key="3">
    <citation type="journal article" date="2005" name="FEBS Lett.">
        <title>Promiscuity in the part-phosphorylative Entner-Doudoroff pathway of the archaeon Sulfolobus solfataricus.</title>
        <authorList>
            <person name="Lamble H.J."/>
            <person name="Theodossis A."/>
            <person name="Milburn C.C."/>
            <person name="Taylor G.L."/>
            <person name="Bull S.D."/>
            <person name="Hough D.W."/>
            <person name="Danson M.J."/>
        </authorList>
    </citation>
    <scope>FUNCTION</scope>
    <scope>SUBSTRATE STEREOSELECTIVITY</scope>
    <scope>BIOPHYSICOCHEMICAL PROPERTIES</scope>
</reference>
<reference key="4">
    <citation type="journal article" date="2004" name="J. Biol. Chem.">
        <title>The structural basis for substrate promiscuity in 2-keto-3-deoxygluconate aldolase from the Entner-Doudoroff pathway in Sulfolobus solfataricus.</title>
        <authorList>
            <person name="Theodossis A."/>
            <person name="Walden H."/>
            <person name="Westwick E.J."/>
            <person name="Connaris H."/>
            <person name="Lamble H.J."/>
            <person name="Hough D.W."/>
            <person name="Danson M.J."/>
            <person name="Taylor G.L."/>
        </authorList>
    </citation>
    <scope>X-RAY CRYSTALLOGRAPHY (1.70 ANGSTROMS) OF 2-294 IN COMPLEX WITH SUBSTRATE ANALOGS</scope>
    <scope>ACTIVE SITE</scope>
    <scope>SUBUNIT</scope>
</reference>
<reference key="5">
    <citation type="submission" date="2011-03" db="PDB data bank">
        <title>Sulfolobus sulfataricus 2-keto-3-deoxygluconate aldolase.</title>
        <authorList>
            <person name="Royer S.F."/>
            <person name="Crennell S.J."/>
            <person name="Angelopolou M."/>
            <person name="Hough D.W."/>
            <person name="Danson M.J."/>
            <person name="Bull S.D."/>
        </authorList>
    </citation>
    <scope>X-RAY CRYSTALLOGRAPHY (1.91 ANGSTROMS)</scope>
    <scope>SUBUNIT</scope>
</reference>
<accession>O54288</accession>
<organism>
    <name type="scientific">Saccharolobus solfataricus</name>
    <name type="common">Sulfolobus solfataricus</name>
    <dbReference type="NCBI Taxonomy" id="2287"/>
    <lineage>
        <taxon>Archaea</taxon>
        <taxon>Thermoproteota</taxon>
        <taxon>Thermoprotei</taxon>
        <taxon>Sulfolobales</taxon>
        <taxon>Sulfolobaceae</taxon>
        <taxon>Saccharolobus</taxon>
    </lineage>
</organism>
<name>KDGA_SACSO</name>
<sequence length="294" mass="33108">MPEIITPIITPFTKDNRIDKEKLKIHAENLIRKGIDKLFVNGTTGLGPSLSPEEKLENLKAVYDVTNKIIFQVGGLNLDDAIRLAKLSKDFDIVGIASYAPYYYPRMSEKHLVKYFKTLCEVSPHPVYLYNYPTATGKDIDAKVAKEIGCFTGVKDTIENIIHTLDYKRLNPNMLVYSGSDMLIATVASTGLDGNVAAGSNYLPEVTVTIKKLAMERKIDEALKLQFLHDEVIEASRIFGSLSSNYVLTKYFQGYDLGYPRPPIFPLDDEEERQLIKKVEGIRAKLVELKILKE</sequence>
<proteinExistence type="evidence at protein level"/>
<evidence type="ECO:0000250" key="1"/>
<evidence type="ECO:0000269" key="2">
    <source>
    </source>
</evidence>
<evidence type="ECO:0000269" key="3">
    <source>
    </source>
</evidence>
<evidence type="ECO:0000269" key="4">
    <source>
    </source>
</evidence>
<evidence type="ECO:0000269" key="5">
    <source>
    </source>
</evidence>
<evidence type="ECO:0000269" key="6">
    <source ref="5"/>
</evidence>
<evidence type="ECO:0000305" key="7"/>
<evidence type="ECO:0000305" key="8">
    <source>
    </source>
</evidence>
<evidence type="ECO:0007829" key="9">
    <source>
        <dbReference type="PDB" id="1W3I"/>
    </source>
</evidence>
<evidence type="ECO:0007829" key="10">
    <source>
        <dbReference type="PDB" id="2YDA"/>
    </source>
</evidence>
<keyword id="KW-0002">3D-structure</keyword>
<keyword id="KW-0119">Carbohydrate metabolism</keyword>
<keyword id="KW-0903">Direct protein sequencing</keyword>
<keyword id="KW-0456">Lyase</keyword>
<keyword id="KW-0704">Schiff base</keyword>
<dbReference type="EC" id="4.1.2.55" evidence="2 3"/>
<dbReference type="EMBL" id="AJ224174">
    <property type="protein sequence ID" value="CAA11866.1"/>
    <property type="molecule type" value="Genomic_DNA"/>
</dbReference>
<dbReference type="RefSeq" id="WP_009991687.1">
    <property type="nucleotide sequence ID" value="NZ_LT549890.1"/>
</dbReference>
<dbReference type="PDB" id="1W37">
    <property type="method" value="X-ray"/>
    <property type="resolution" value="2.00 A"/>
    <property type="chains" value="A/B/C/D=1-294"/>
</dbReference>
<dbReference type="PDB" id="1W3I">
    <property type="method" value="X-ray"/>
    <property type="resolution" value="1.70 A"/>
    <property type="chains" value="A/B/C/D=2-294"/>
</dbReference>
<dbReference type="PDB" id="1W3N">
    <property type="method" value="X-ray"/>
    <property type="resolution" value="2.10 A"/>
    <property type="chains" value="A/B/C/D=1-294"/>
</dbReference>
<dbReference type="PDB" id="1W3T">
    <property type="method" value="X-ray"/>
    <property type="resolution" value="2.10 A"/>
    <property type="chains" value="A/B/C/D=1-294"/>
</dbReference>
<dbReference type="PDB" id="2YDA">
    <property type="method" value="X-ray"/>
    <property type="resolution" value="1.91 A"/>
    <property type="chains" value="A/B=1-294"/>
</dbReference>
<dbReference type="PDB" id="6G3Z">
    <property type="method" value="X-ray"/>
    <property type="resolution" value="2.35 A"/>
    <property type="chains" value="A/B=1-294"/>
</dbReference>
<dbReference type="PDB" id="6GSO">
    <property type="method" value="X-ray"/>
    <property type="resolution" value="2.00 A"/>
    <property type="chains" value="A/B/C/D=2-294"/>
</dbReference>
<dbReference type="PDB" id="6GT8">
    <property type="method" value="X-ray"/>
    <property type="resolution" value="3.15 A"/>
    <property type="chains" value="A/B=2-294"/>
</dbReference>
<dbReference type="PDB" id="6GV2">
    <property type="method" value="X-ray"/>
    <property type="resolution" value="2.10 A"/>
    <property type="chains" value="A/B=1-294"/>
</dbReference>
<dbReference type="PDB" id="6H2R">
    <property type="method" value="X-ray"/>
    <property type="resolution" value="1.57 A"/>
    <property type="chains" value="A/B/C/D=2-294"/>
</dbReference>
<dbReference type="PDB" id="6H2S">
    <property type="method" value="X-ray"/>
    <property type="resolution" value="2.17 A"/>
    <property type="chains" value="A/B/C/D=2-294"/>
</dbReference>
<dbReference type="PDB" id="6H7R">
    <property type="method" value="X-ray"/>
    <property type="resolution" value="2.80 A"/>
    <property type="chains" value="A/B/C/D=2-294"/>
</dbReference>
<dbReference type="PDB" id="6H7S">
    <property type="method" value="X-ray"/>
    <property type="resolution" value="3.20 A"/>
    <property type="chains" value="A/B=2-294"/>
</dbReference>
<dbReference type="PDBsum" id="1W37"/>
<dbReference type="PDBsum" id="1W3I"/>
<dbReference type="PDBsum" id="1W3N"/>
<dbReference type="PDBsum" id="1W3T"/>
<dbReference type="PDBsum" id="2YDA"/>
<dbReference type="PDBsum" id="6G3Z"/>
<dbReference type="PDBsum" id="6GSO"/>
<dbReference type="PDBsum" id="6GT8"/>
<dbReference type="PDBsum" id="6GV2"/>
<dbReference type="PDBsum" id="6H2R"/>
<dbReference type="PDBsum" id="6H2S"/>
<dbReference type="PDBsum" id="6H7R"/>
<dbReference type="PDBsum" id="6H7S"/>
<dbReference type="SMR" id="O54288"/>
<dbReference type="GeneID" id="44128913"/>
<dbReference type="KEGG" id="ag:CAA11866"/>
<dbReference type="OMA" id="LYEYNQC"/>
<dbReference type="OrthoDB" id="350860at2157"/>
<dbReference type="BioCyc" id="MetaCyc:MONOMER-4861"/>
<dbReference type="BRENDA" id="4.1.2.14">
    <property type="organism ID" value="6163"/>
</dbReference>
<dbReference type="BRENDA" id="4.1.2.55">
    <property type="organism ID" value="6163"/>
</dbReference>
<dbReference type="SABIO-RK" id="O54288"/>
<dbReference type="UniPathway" id="UPA00856">
    <property type="reaction ID" value="UER00829"/>
</dbReference>
<dbReference type="EvolutionaryTrace" id="O54288"/>
<dbReference type="GO" id="GO:0008674">
    <property type="term" value="F:2-dehydro-3-deoxy-6-phosphogalactonate aldolase activity"/>
    <property type="evidence" value="ECO:0000314"/>
    <property type="project" value="UniProtKB"/>
</dbReference>
<dbReference type="GO" id="GO:0008675">
    <property type="term" value="F:2-dehydro-3-deoxy-phosphogluconate aldolase activity"/>
    <property type="evidence" value="ECO:0000314"/>
    <property type="project" value="UniProtKB"/>
</dbReference>
<dbReference type="GO" id="GO:0008840">
    <property type="term" value="F:4-hydroxy-tetrahydrodipicolinate synthase activity"/>
    <property type="evidence" value="ECO:0007669"/>
    <property type="project" value="TreeGrafter"/>
</dbReference>
<dbReference type="CDD" id="cd00953">
    <property type="entry name" value="KDG_aldolase"/>
    <property type="match status" value="1"/>
</dbReference>
<dbReference type="FunFam" id="3.20.20.70:FF:000289">
    <property type="entry name" value="2-dehydro-3-deoxy-phosphogluconate/2-dehydro-3-deoxy-6-phosphogalactonate aldolase"/>
    <property type="match status" value="1"/>
</dbReference>
<dbReference type="Gene3D" id="3.20.20.70">
    <property type="entry name" value="Aldolase class I"/>
    <property type="match status" value="1"/>
</dbReference>
<dbReference type="InterPro" id="IPR013785">
    <property type="entry name" value="Aldolase_TIM"/>
</dbReference>
<dbReference type="InterPro" id="IPR002220">
    <property type="entry name" value="DapA-like"/>
</dbReference>
<dbReference type="InterPro" id="IPR053415">
    <property type="entry name" value="ED_pathway_aldolase"/>
</dbReference>
<dbReference type="NCBIfam" id="NF040954">
    <property type="entry name" value="Arch_KDGaldase"/>
    <property type="match status" value="1"/>
</dbReference>
<dbReference type="PANTHER" id="PTHR12128:SF66">
    <property type="entry name" value="4-HYDROXY-2-OXOGLUTARATE ALDOLASE, MITOCHONDRIAL"/>
    <property type="match status" value="1"/>
</dbReference>
<dbReference type="PANTHER" id="PTHR12128">
    <property type="entry name" value="DIHYDRODIPICOLINATE SYNTHASE"/>
    <property type="match status" value="1"/>
</dbReference>
<dbReference type="Pfam" id="PF00701">
    <property type="entry name" value="DHDPS"/>
    <property type="match status" value="1"/>
</dbReference>
<dbReference type="PIRSF" id="PIRSF001365">
    <property type="entry name" value="DHDPS"/>
    <property type="match status" value="1"/>
</dbReference>
<dbReference type="PRINTS" id="PR00146">
    <property type="entry name" value="DHPICSNTHASE"/>
</dbReference>
<dbReference type="SMART" id="SM01130">
    <property type="entry name" value="DHDPS"/>
    <property type="match status" value="1"/>
</dbReference>
<dbReference type="SUPFAM" id="SSF51569">
    <property type="entry name" value="Aldolase"/>
    <property type="match status" value="1"/>
</dbReference>
<feature type="initiator methionine" description="Removed" evidence="2">
    <location>
        <position position="1"/>
    </location>
</feature>
<feature type="chain" id="PRO_0000422658" description="2-dehydro-3-deoxy-phosphogluconate/2-dehydro-3-deoxy-6-phosphogalactonate aldolase">
    <location>
        <begin position="2"/>
        <end position="294"/>
    </location>
</feature>
<feature type="active site" description="Schiff-base intermediate with substrate" evidence="4">
    <location>
        <position position="155"/>
    </location>
</feature>
<feature type="binding site">
    <location>
        <begin position="43"/>
        <end position="44"/>
    </location>
    <ligand>
        <name>substrate</name>
    </ligand>
</feature>
<feature type="binding site">
    <location>
        <begin position="130"/>
        <end position="132"/>
    </location>
    <ligand>
        <name>substrate</name>
    </ligand>
</feature>
<feature type="binding site">
    <location>
        <begin position="155"/>
        <end position="157"/>
    </location>
    <ligand>
        <name>substrate</name>
    </ligand>
</feature>
<feature type="site" description="Proton shuttle" evidence="1">
    <location>
        <position position="130"/>
    </location>
</feature>
<feature type="strand" evidence="9">
    <location>
        <begin position="3"/>
        <end position="7"/>
    </location>
</feature>
<feature type="strand" evidence="9">
    <location>
        <begin position="16"/>
        <end position="18"/>
    </location>
</feature>
<feature type="helix" evidence="9">
    <location>
        <begin position="20"/>
        <end position="32"/>
    </location>
</feature>
<feature type="strand" evidence="9">
    <location>
        <begin position="37"/>
        <end position="42"/>
    </location>
</feature>
<feature type="turn" evidence="9">
    <location>
        <begin position="43"/>
        <end position="46"/>
    </location>
</feature>
<feature type="helix" evidence="9">
    <location>
        <begin position="47"/>
        <end position="49"/>
    </location>
</feature>
<feature type="helix" evidence="9">
    <location>
        <begin position="52"/>
        <end position="63"/>
    </location>
</feature>
<feature type="strand" evidence="9">
    <location>
        <begin position="69"/>
        <end position="72"/>
    </location>
</feature>
<feature type="helix" evidence="9">
    <location>
        <begin position="78"/>
        <end position="87"/>
    </location>
</feature>
<feature type="helix" evidence="9">
    <location>
        <begin position="88"/>
        <end position="90"/>
    </location>
</feature>
<feature type="strand" evidence="9">
    <location>
        <begin position="94"/>
        <end position="99"/>
    </location>
</feature>
<feature type="helix" evidence="9">
    <location>
        <begin position="109"/>
        <end position="122"/>
    </location>
</feature>
<feature type="strand" evidence="9">
    <location>
        <begin position="127"/>
        <end position="131"/>
    </location>
</feature>
<feature type="helix" evidence="9">
    <location>
        <begin position="133"/>
        <end position="136"/>
    </location>
</feature>
<feature type="helix" evidence="9">
    <location>
        <begin position="142"/>
        <end position="148"/>
    </location>
</feature>
<feature type="strand" evidence="9">
    <location>
        <begin position="151"/>
        <end position="156"/>
    </location>
</feature>
<feature type="helix" evidence="9">
    <location>
        <begin position="161"/>
        <end position="170"/>
    </location>
</feature>
<feature type="strand" evidence="9">
    <location>
        <begin position="174"/>
        <end position="178"/>
    </location>
</feature>
<feature type="helix" evidence="10">
    <location>
        <begin position="181"/>
        <end position="183"/>
    </location>
</feature>
<feature type="helix" evidence="9">
    <location>
        <begin position="184"/>
        <end position="189"/>
    </location>
</feature>
<feature type="strand" evidence="9">
    <location>
        <begin position="194"/>
        <end position="196"/>
    </location>
</feature>
<feature type="helix" evidence="9">
    <location>
        <begin position="198"/>
        <end position="201"/>
    </location>
</feature>
<feature type="helix" evidence="9">
    <location>
        <begin position="204"/>
        <end position="215"/>
    </location>
</feature>
<feature type="helix" evidence="9">
    <location>
        <begin position="219"/>
        <end position="237"/>
    </location>
</feature>
<feature type="helix" evidence="9">
    <location>
        <begin position="241"/>
        <end position="253"/>
    </location>
</feature>
<feature type="helix" evidence="9">
    <location>
        <begin position="269"/>
        <end position="288"/>
    </location>
</feature>
<comment type="function">
    <text evidence="2 3 5">Involved in the degradation of glucose and galactose via the Entner-Doudoroff pathway. Catalyzes the reversible cleavage of 2-keto-3-deoxy-6-phosphogluconate (KDPG) and 2-keto-3-deoxygluconate (KDG) forming pyruvate and glyceraldehyde 3-phosphate or glyceraldehyde, respectively. It is also able to catalyze the reversible cleavage of 2-keto-3-deoxy-6-phosphogalactonate (KDPGal) and 2-keto-3-deoxygalactonate (KDGal). It is equally active with both D- and L-glyceraldehyde.</text>
</comment>
<comment type="catalytic activity">
    <reaction evidence="2 3">
        <text>2-dehydro-3-deoxy-6-phospho-D-gluconate = D-glyceraldehyde 3-phosphate + pyruvate</text>
        <dbReference type="Rhea" id="RHEA:17089"/>
        <dbReference type="ChEBI" id="CHEBI:15361"/>
        <dbReference type="ChEBI" id="CHEBI:57569"/>
        <dbReference type="ChEBI" id="CHEBI:59776"/>
        <dbReference type="EC" id="4.1.2.55"/>
    </reaction>
</comment>
<comment type="catalytic activity">
    <reaction evidence="2 3">
        <text>2-dehydro-3-deoxy-6-phospho-D-galactonate = D-glyceraldehyde 3-phosphate + pyruvate</text>
        <dbReference type="Rhea" id="RHEA:24464"/>
        <dbReference type="ChEBI" id="CHEBI:15361"/>
        <dbReference type="ChEBI" id="CHEBI:58298"/>
        <dbReference type="ChEBI" id="CHEBI:59776"/>
        <dbReference type="EC" id="4.1.2.55"/>
    </reaction>
</comment>
<comment type="biophysicochemical properties">
    <kinetics>
        <KM evidence="2 3 5">0.1 mM for KDPG (at 60 degrees Celsius and at pH 6)</KM>
        <KM evidence="2 3 5">0.17 mM for KDPGal (at 60 degrees Celsius and at pH 6)</KM>
        <KM evidence="2 3 5">3.9 mM for pyruvate (at 70 degrees Celsius and at pH 6)</KM>
        <KM evidence="2 3 5">3.9 mM for D-glyceraldehyde (at 70 degrees Celsius and at pH 6)</KM>
        <KM evidence="2 3 5">5.2 mM for D,L-glyceraldehyde (at 70 degrees Celsius and at pH 6)</KM>
        <KM evidence="2 3 5">7.1 mM for L-glyceraldehyde (at 70 degrees Celsius and at pH 6)</KM>
        <KM evidence="2 3 5">9.9 mM for KDGal (at 60 degrees Celsius and at pH 6)</KM>
        <KM evidence="2 3 5">25.7 mM for KDG (at 60 degrees Celsius and at pH 6)</KM>
        <Vmax evidence="2 3 5">12.3 umol/min/mg enzyme with KDGal as substrate (at 60 degrees Celsius and at pH 6)</Vmax>
        <Vmax evidence="2 3 5">15.7 umol/min/mg enzyme with pyruvate as substrate (at 70 degrees Celsius and at pH 6)</Vmax>
        <Vmax evidence="2 3 5">17.1 umol/min/mg enzyme with D,L-glyceraldehyde as substrate (at 70 degrees Celsius and at pH 6)</Vmax>
        <Vmax evidence="2 3 5">18.0 umol/min/mg enzyme with D-glyceraldehyde as substrate (at 70 degrees Celsius and at pH 6)</Vmax>
        <Vmax evidence="2 3 5">18.0 umol/min/mg enzyme with L-glyceraldehyde as substrate (at 70 degrees Celsius and at pH 6)</Vmax>
        <Vmax evidence="2 3 5">51.4 umol/min/mg enzyme with KDG as substrate (at 60 degrees Celsius and at pH 6)</Vmax>
        <text>kcat is 28.2 sec(-1) for KDG and 6.8 sec(-1) for KDGal.</text>
    </kinetics>
    <temperatureDependence>
        <text evidence="2 3 5">Extremely thermostable.</text>
    </temperatureDependence>
</comment>
<comment type="pathway">
    <text>Carbohydrate acid metabolism; 2-dehydro-3-deoxy-D-gluconate degradation; D-glyceraldehyde 3-phosphate and pyruvate from 2-dehydro-3-deoxy-D-gluconate: step 2/2.</text>
</comment>
<comment type="subunit">
    <text evidence="2 4 6">Homotetramer; dimer of dimers.</text>
</comment>
<comment type="miscellaneous">
    <text evidence="8">The metabolic pathway in Sulfolobus species contrasts with the situation observed in other microorganisms where separate enzymes exist for the catabolism of the two sugars, glucose and galactose.</text>
</comment>
<comment type="similarity">
    <text evidence="7">Belongs to the DapA family. KDPG aldolase subfamily.</text>
</comment>
<protein>
    <recommendedName>
        <fullName>2-dehydro-3-deoxy-phosphogluconate/2-dehydro-3-deoxy-6-phosphogalactonate aldolase</fullName>
        <ecNumber evidence="2 3">4.1.2.55</ecNumber>
    </recommendedName>
</protein>